<evidence type="ECO:0000255" key="1">
    <source>
        <dbReference type="HAMAP-Rule" id="MF_01641"/>
    </source>
</evidence>
<dbReference type="EMBL" id="CP000946">
    <property type="protein sequence ID" value="ACA77976.1"/>
    <property type="molecule type" value="Genomic_DNA"/>
</dbReference>
<dbReference type="RefSeq" id="WP_001288368.1">
    <property type="nucleotide sequence ID" value="NZ_MTFT01000016.1"/>
</dbReference>
<dbReference type="SMR" id="B1ITG9"/>
<dbReference type="GeneID" id="93775408"/>
<dbReference type="KEGG" id="ecl:EcolC_2341"/>
<dbReference type="HOGENOM" id="CLU_180697_1_0_6"/>
<dbReference type="HAMAP" id="MF_01641">
    <property type="entry name" value="UPF0509"/>
    <property type="match status" value="1"/>
</dbReference>
<dbReference type="InterPro" id="IPR020887">
    <property type="entry name" value="UPF0509"/>
</dbReference>
<dbReference type="NCBIfam" id="NF010179">
    <property type="entry name" value="PRK13658.1"/>
    <property type="match status" value="1"/>
</dbReference>
<dbReference type="Pfam" id="PF23675">
    <property type="entry name" value="YciZ"/>
    <property type="match status" value="1"/>
</dbReference>
<sequence>MSEFDAQRVAERIDIVLDILVAGDYHSAIHNLEILKAELLRQVAESTPDIPKAPWEI</sequence>
<accession>B1ITG9</accession>
<protein>
    <recommendedName>
        <fullName evidence="1">UPF0509 protein YciZ</fullName>
    </recommendedName>
</protein>
<proteinExistence type="inferred from homology"/>
<comment type="similarity">
    <text evidence="1">Belongs to the UPF0509 family.</text>
</comment>
<organism>
    <name type="scientific">Escherichia coli (strain ATCC 8739 / DSM 1576 / NBRC 3972 / NCIMB 8545 / WDCM 00012 / Crooks)</name>
    <dbReference type="NCBI Taxonomy" id="481805"/>
    <lineage>
        <taxon>Bacteria</taxon>
        <taxon>Pseudomonadati</taxon>
        <taxon>Pseudomonadota</taxon>
        <taxon>Gammaproteobacteria</taxon>
        <taxon>Enterobacterales</taxon>
        <taxon>Enterobacteriaceae</taxon>
        <taxon>Escherichia</taxon>
    </lineage>
</organism>
<name>YCIZ_ECOLC</name>
<feature type="chain" id="PRO_1000088211" description="UPF0509 protein YciZ">
    <location>
        <begin position="1"/>
        <end position="57"/>
    </location>
</feature>
<gene>
    <name evidence="1" type="primary">yciZ</name>
    <name type="ordered locus">EcolC_2341</name>
</gene>
<reference key="1">
    <citation type="submission" date="2008-02" db="EMBL/GenBank/DDBJ databases">
        <title>Complete sequence of Escherichia coli C str. ATCC 8739.</title>
        <authorList>
            <person name="Copeland A."/>
            <person name="Lucas S."/>
            <person name="Lapidus A."/>
            <person name="Glavina del Rio T."/>
            <person name="Dalin E."/>
            <person name="Tice H."/>
            <person name="Bruce D."/>
            <person name="Goodwin L."/>
            <person name="Pitluck S."/>
            <person name="Kiss H."/>
            <person name="Brettin T."/>
            <person name="Detter J.C."/>
            <person name="Han C."/>
            <person name="Kuske C.R."/>
            <person name="Schmutz J."/>
            <person name="Larimer F."/>
            <person name="Land M."/>
            <person name="Hauser L."/>
            <person name="Kyrpides N."/>
            <person name="Mikhailova N."/>
            <person name="Ingram L."/>
            <person name="Richardson P."/>
        </authorList>
    </citation>
    <scope>NUCLEOTIDE SEQUENCE [LARGE SCALE GENOMIC DNA]</scope>
    <source>
        <strain>ATCC 8739 / DSM 1576 / NBRC 3972 / NCIMB 8545 / WDCM 00012 / Crooks</strain>
    </source>
</reference>